<feature type="chain" id="PRO_0000137123" description="Nucleoside diphosphate kinase 3">
    <location>
        <begin position="1"/>
        <end position="169"/>
    </location>
</feature>
<feature type="active site" description="Pros-phosphohistidine intermediate" evidence="1">
    <location>
        <position position="135"/>
    </location>
</feature>
<feature type="binding site" evidence="10 15">
    <location>
        <position position="29"/>
    </location>
    <ligand>
        <name>ADP</name>
        <dbReference type="ChEBI" id="CHEBI:456216"/>
    </ligand>
</feature>
<feature type="binding site" evidence="10 15">
    <location>
        <position position="105"/>
    </location>
    <ligand>
        <name>ADP</name>
        <dbReference type="ChEBI" id="CHEBI:456216"/>
    </ligand>
</feature>
<feature type="binding site" evidence="10 15">
    <location>
        <position position="111"/>
    </location>
    <ligand>
        <name>ADP</name>
        <dbReference type="ChEBI" id="CHEBI:456216"/>
    </ligand>
</feature>
<feature type="binding site" evidence="10 15">
    <location>
        <position position="122"/>
    </location>
    <ligand>
        <name>ADP</name>
        <dbReference type="ChEBI" id="CHEBI:456216"/>
    </ligand>
</feature>
<feature type="binding site" evidence="10 15">
    <location>
        <position position="129"/>
    </location>
    <ligand>
        <name>ADP</name>
        <dbReference type="ChEBI" id="CHEBI:456216"/>
    </ligand>
</feature>
<feature type="binding site" evidence="10 15">
    <location>
        <position position="132"/>
    </location>
    <ligand>
        <name>ADP</name>
        <dbReference type="ChEBI" id="CHEBI:456216"/>
    </ligand>
</feature>
<feature type="mutagenesis site" description="Lacks phosphatidic acid binding activity; when associated with A-13. Decreases NME3 enrichement at the mitochondrial contact interface; when associated with A-13." evidence="8">
    <original>F</original>
    <variation>A</variation>
    <location>
        <position position="9"/>
    </location>
</feature>
<feature type="mutagenesis site" description="Lacks phosphatidic acid binding activity; when associated with A-9. Decreases NME3 enrichement at the mitochondrial contact interface; when associated with A-9." evidence="8">
    <original>F</original>
    <variation>A</variation>
    <location>
        <position position="13"/>
    </location>
</feature>
<feature type="mutagenesis site" description="Impairs hexamerization; when associated with D-46. Decreases mitochondrial tethering activity; when associated with D-46." evidence="7 8">
    <original>E</original>
    <variation>D</variation>
    <location>
        <position position="40"/>
    </location>
</feature>
<feature type="mutagenesis site" description="Impairs hexamerization; when associated with D-40. Decreases mitochondrial tethering activity; when associated with D-40." evidence="7 8">
    <original>E</original>
    <variation>D</variation>
    <location>
        <position position="46"/>
    </location>
</feature>
<feature type="mutagenesis site" description="Lacks of nucleoside diphosphate kinase activity. Does not affect mitochondrial fusion activity." evidence="7">
    <original>H</original>
    <variation>Q</variation>
    <location>
        <position position="135"/>
    </location>
</feature>
<feature type="sequence conflict" description="In Ref. 1; AAA85097." evidence="13" ref="1">
    <original>A</original>
    <variation>S</variation>
    <location>
        <position position="60"/>
    </location>
</feature>
<feature type="sequence conflict" description="In Ref. 1; AAA85097." evidence="13" ref="1">
    <location>
        <position position="131"/>
    </location>
</feature>
<feature type="helix" evidence="17">
    <location>
        <begin position="19"/>
        <end position="21"/>
    </location>
</feature>
<feature type="strand" evidence="18">
    <location>
        <begin position="23"/>
        <end position="28"/>
    </location>
</feature>
<feature type="helix" evidence="18">
    <location>
        <begin position="30"/>
        <end position="34"/>
    </location>
</feature>
<feature type="helix" evidence="18">
    <location>
        <begin position="38"/>
        <end position="48"/>
    </location>
</feature>
<feature type="strand" evidence="18">
    <location>
        <begin position="51"/>
        <end position="58"/>
    </location>
</feature>
<feature type="helix" evidence="18">
    <location>
        <begin position="62"/>
        <end position="68"/>
    </location>
</feature>
<feature type="helix" evidence="18">
    <location>
        <begin position="70"/>
        <end position="72"/>
    </location>
</feature>
<feature type="helix" evidence="18">
    <location>
        <begin position="78"/>
        <end position="85"/>
    </location>
</feature>
<feature type="strand" evidence="18">
    <location>
        <begin position="90"/>
        <end position="97"/>
    </location>
</feature>
<feature type="helix" evidence="18">
    <location>
        <begin position="100"/>
        <end position="108"/>
    </location>
</feature>
<feature type="helix" evidence="18">
    <location>
        <begin position="113"/>
        <end position="115"/>
    </location>
</feature>
<feature type="helix" evidence="18">
    <location>
        <begin position="121"/>
        <end position="125"/>
    </location>
</feature>
<feature type="helix" evidence="16">
    <location>
        <begin position="129"/>
        <end position="131"/>
    </location>
</feature>
<feature type="strand" evidence="18">
    <location>
        <begin position="134"/>
        <end position="136"/>
    </location>
</feature>
<feature type="helix" evidence="18">
    <location>
        <begin position="140"/>
        <end position="150"/>
    </location>
</feature>
<feature type="helix" evidence="18">
    <location>
        <begin position="153"/>
        <end position="155"/>
    </location>
</feature>
<feature type="helix" evidence="18">
    <location>
        <begin position="164"/>
        <end position="167"/>
    </location>
</feature>
<accession>Q13232</accession>
<accession>Q9BWH4</accession>
<name>NDK3_HUMAN</name>
<reference key="1">
    <citation type="journal article" date="1995" name="Proc. Natl. Acad. Sci. U.S.A.">
        <title>Overexpression of DR-nm23, a protein encoded by a member of the nm23 gene family, inhibits granulocyte differentiation and induces apoptosis in 32Dc13 myeloid cells.</title>
        <authorList>
            <person name="Venturelli D."/>
            <person name="Martinez R."/>
            <person name="Melotti P."/>
            <person name="Casella I."/>
            <person name="Peschle C."/>
            <person name="Cucco C."/>
            <person name="Spampinato G."/>
            <person name="Darzynkiewicz Z."/>
            <person name="Calabretta B."/>
        </authorList>
    </citation>
    <scope>NUCLEOTIDE SEQUENCE [MRNA]</scope>
    <scope>FUNCTION</scope>
    <scope>DEVELOPMENTAL STAGE</scope>
</reference>
<reference key="2">
    <citation type="journal article" date="2001" name="Hum. Mol. Genet.">
        <title>Sequence, structure and pathology of the fully annotated terminal 2 Mb of the short arm of human chromosome 16.</title>
        <authorList>
            <person name="Daniels R.J."/>
            <person name="Peden J.F."/>
            <person name="Lloyd C."/>
            <person name="Horsley S.W."/>
            <person name="Clark K."/>
            <person name="Tufarelli C."/>
            <person name="Kearney L."/>
            <person name="Buckle V.J."/>
            <person name="Doggett N.A."/>
            <person name="Flint J."/>
            <person name="Higgs D.R."/>
        </authorList>
    </citation>
    <scope>NUCLEOTIDE SEQUENCE [LARGE SCALE GENOMIC DNA]</scope>
</reference>
<reference key="3">
    <citation type="journal article" date="2004" name="Genome Res.">
        <title>The status, quality, and expansion of the NIH full-length cDNA project: the Mammalian Gene Collection (MGC).</title>
        <authorList>
            <consortium name="The MGC Project Team"/>
        </authorList>
    </citation>
    <scope>NUCLEOTIDE SEQUENCE [LARGE SCALE MRNA]</scope>
    <source>
        <tissue>Eye</tissue>
    </source>
</reference>
<reference key="4">
    <citation type="journal article" date="2001" name="Eur. J. Biochem.">
        <title>Structural and catalytic properties and homology modelling of the human nucleoside diphosphate kinase C, product of the DRnm23 gene.</title>
        <authorList>
            <person name="Erent M."/>
            <person name="Gonin P."/>
            <person name="Cherfils J."/>
            <person name="Tissier P."/>
            <person name="Raschella G."/>
            <person name="Giartosio A."/>
            <person name="Agou F."/>
            <person name="Sarger C."/>
            <person name="Lacombe M.L."/>
            <person name="Konrad M."/>
            <person name="Lascu I."/>
        </authorList>
    </citation>
    <scope>FUNCTION</scope>
    <scope>CATALYTIC ACTIVITY</scope>
    <scope>BIOPHYSICOCHEMICAL PROPERTIES</scope>
</reference>
<reference evidence="15" key="5">
    <citation type="submission" date="2005-05" db="PDB data bank">
        <title>Structure of human nucleoside-diphosphate kinase 3.</title>
        <authorList>
            <person name="Dimov S."/>
            <person name="Choe J."/>
            <person name="Arrowsmith C."/>
            <person name="Edwards A."/>
            <person name="Sundstrom M."/>
            <person name="Bochkarev A."/>
            <person name="Park H."/>
        </authorList>
    </citation>
    <scope>X-RAY CRYSTALLOGRAPHY (2.30 ANGSTROMS) IN COMPLEX WITH ADP</scope>
</reference>
<reference key="6">
    <citation type="journal article" date="2011" name="BMC Syst. Biol.">
        <title>Initial characterization of the human central proteome.</title>
        <authorList>
            <person name="Burkard T.R."/>
            <person name="Planyavsky M."/>
            <person name="Kaupe I."/>
            <person name="Breitwieser F.P."/>
            <person name="Buerckstuemmer T."/>
            <person name="Bennett K.L."/>
            <person name="Superti-Furga G."/>
            <person name="Colinge J."/>
        </authorList>
    </citation>
    <scope>IDENTIFICATION BY MASS SPECTROMETRY [LARGE SCALE ANALYSIS]</scope>
</reference>
<reference key="7">
    <citation type="journal article" date="2016" name="Biochem. J.">
        <title>The direct interaction of NME3 with Tip60 in DNA repair.</title>
        <authorList>
            <person name="Tsao N."/>
            <person name="Yang Y.C."/>
            <person name="Deng Y.J."/>
            <person name="Chang Z.F."/>
        </authorList>
    </citation>
    <scope>INTERACTION WITH KAT5</scope>
    <scope>SUBCELLULAR LOCATION</scope>
</reference>
<reference key="8">
    <citation type="journal article" date="2018" name="J. Biol. Chem.">
        <title>The nucleoside-diphosphate kinase NME3 associates with nephronophthisis proteins and is required for ciliary function during renal development.</title>
        <authorList>
            <person name="Hoff S."/>
            <person name="Epting D."/>
            <person name="Falk N."/>
            <person name="Schroda S."/>
            <person name="Braun D.A."/>
            <person name="Halbritter J."/>
            <person name="Hildebrandt F."/>
            <person name="Kramer-Zucker A."/>
            <person name="Bergmann C."/>
            <person name="Walz G."/>
            <person name="Lienkamp S.S."/>
        </authorList>
    </citation>
    <scope>INTERACTION WITH ANKS6 AND NEK8</scope>
    <scope>SUBUNIT</scope>
</reference>
<reference key="9">
    <citation type="journal article" date="2019" name="Proc. Natl. Acad. Sci. U.S.A.">
        <title>Two separate functions of NME3 critical for cell survival underlie a neurodegenerative disorder.</title>
        <authorList>
            <person name="Chen C.W."/>
            <person name="Wang H.L."/>
            <person name="Huang C.W."/>
            <person name="Huang C.Y."/>
            <person name="Lim W.K."/>
            <person name="Tu I.C."/>
            <person name="Koorapati A."/>
            <person name="Hsieh S.T."/>
            <person name="Kan H.W."/>
            <person name="Tzeng S.R."/>
            <person name="Liao J.C."/>
            <person name="Chong W.M."/>
            <person name="Naroditzky I."/>
            <person name="Kidron D."/>
            <person name="Eran A."/>
            <person name="Nijim Y."/>
            <person name="Sela E."/>
            <person name="Feldman H.B."/>
            <person name="Kalfon L."/>
            <person name="Raveh-Barak H."/>
            <person name="Falik-Zaccai T.C."/>
            <person name="Elpeleg O."/>
            <person name="Mandel H."/>
            <person name="Chang Z.F."/>
        </authorList>
    </citation>
    <scope>SUBCELLULAR LOCATION</scope>
    <scope>FUNCTION</scope>
    <scope>CATALYTIC ACTIVITY</scope>
    <scope>MUTAGENESIS OF GLU-40; GLU-46 AND HIS-135</scope>
    <scope>INVOLVEMENT IN DISEASE</scope>
    <scope>SUBUNIT</scope>
    <scope>DOMAIN</scope>
</reference>
<reference key="10">
    <citation type="journal article" date="2023" name="J. Cell Biol.">
        <title>NME3 binds to phosphatidic acid and mediates PLD6-induced mitochondrial tethering.</title>
        <authorList>
            <person name="Su Y.A."/>
            <person name="Chiu H.Y."/>
            <person name="Chang Y.C."/>
            <person name="Sung C.J."/>
            <person name="Chen C.W."/>
            <person name="Tei R."/>
            <person name="Huang X.R."/>
            <person name="Hsu S.C."/>
            <person name="Lin S.S."/>
            <person name="Wang H.C."/>
            <person name="Lin Y.C."/>
            <person name="Hsu J.C."/>
            <person name="Bauer H."/>
            <person name="Feng Y."/>
            <person name="Baskin J.M."/>
            <person name="Chang Z.F."/>
            <person name="Liu Y.W."/>
        </authorList>
    </citation>
    <scope>FUNCTION</scope>
    <scope>BINDING TO PHOSPHATIDIC ACID</scope>
    <scope>SUBCELLULAR LOCATION</scope>
    <scope>MUTAGENESIS OF PHE-9; PHE-13; GLU-40 AND GLU-46</scope>
</reference>
<proteinExistence type="evidence at protein level"/>
<sequence>MICLVLTIFANLFPAACTGAHERTFLAVKPDGVQRRLVGEIVRRFERKGFKLVALKLVQASEELLREHYAELRERPFYGRLVKYMASGPVVAMVWQGLDVVRTSRALIGATNPADAPPGTIRGDFCIEVGKNLIHGSDSVESARREIALWFRADELLCWEDSAGHWLYE</sequence>
<gene>
    <name evidence="14" type="primary">NME3</name>
</gene>
<comment type="function">
    <text evidence="2 4 7 9">Catalyzes the phosphorylation of ribonucleosides and deoxyribonucleoside diphosphates, other than ATP, into the corresponding triphosphates with ATP as the major phosphate donor (PubMed:11277919, PubMed:30587587). The ATP gamma phosphate is transferred to the nucleoside diphosphate beta phosphate via a ping-pong mechanism, using a phosphorylated active-site intermediate. Through the catalyzed exchange of gamma-phosphate between di- and triphosphonucleosides participates in regulation of intracellular nucleotide homeostasis (PubMed:11277919, PubMed:30587587). Inhibits granulocyte differentiation (PubMed:7638209). May be required for ciliary function during renal development (By similarity).</text>
</comment>
<comment type="function">
    <text evidence="7 8">Independently of its kinase activity, facilitates mitochondrial tethering prior to membrane fusion through its direct membrane-binding and hexamerization (PubMed:30587587, PubMed:37584589). Implicated in repair of both single- and double-stranded breaks in DNA through its association with the ribonucleotide reductase complex (RNR complex) via its interaction with the histone acetyltransferase KAT5, this interaction enables recruitment of NME3 at DNA damage sites where it plays a role in the repair of DNA, independently of its kinase activity (PubMed:37584589).</text>
</comment>
<comment type="catalytic activity">
    <reaction evidence="4 7">
        <text>a 2'-deoxyribonucleoside 5'-diphosphate + ATP = a 2'-deoxyribonucleoside 5'-triphosphate + ADP</text>
        <dbReference type="Rhea" id="RHEA:44640"/>
        <dbReference type="ChEBI" id="CHEBI:30616"/>
        <dbReference type="ChEBI" id="CHEBI:61560"/>
        <dbReference type="ChEBI" id="CHEBI:73316"/>
        <dbReference type="ChEBI" id="CHEBI:456216"/>
        <dbReference type="EC" id="2.7.4.6"/>
    </reaction>
    <physiologicalReaction direction="left-to-right" evidence="13">
        <dbReference type="Rhea" id="RHEA:44641"/>
    </physiologicalReaction>
</comment>
<comment type="catalytic activity">
    <reaction evidence="4 7">
        <text>a ribonucleoside 5'-diphosphate + ATP = a ribonucleoside 5'-triphosphate + ADP</text>
        <dbReference type="Rhea" id="RHEA:18113"/>
        <dbReference type="ChEBI" id="CHEBI:30616"/>
        <dbReference type="ChEBI" id="CHEBI:57930"/>
        <dbReference type="ChEBI" id="CHEBI:61557"/>
        <dbReference type="ChEBI" id="CHEBI:456216"/>
        <dbReference type="EC" id="2.7.4.6"/>
    </reaction>
    <physiologicalReaction direction="left-to-right" evidence="13">
        <dbReference type="Rhea" id="RHEA:18114"/>
    </physiologicalReaction>
</comment>
<comment type="cofactor">
    <cofactor evidence="1">
        <name>Mg(2+)</name>
        <dbReference type="ChEBI" id="CHEBI:18420"/>
    </cofactor>
</comment>
<comment type="biophysicochemical properties">
    <kinetics>
        <KM evidence="4">25 uM for ATP</KM>
        <KM evidence="4">220 uM for TDP</KM>
    </kinetics>
</comment>
<comment type="subunit">
    <text evidence="5 6 7">Homohexamer (PubMed:30587587). Interacts (via its N-terminal region) with KAT5; this interaction enables recruitment of NME3 at DNA damage sites where it plays a role in the repair of DNA (PubMed:26945015). Found in association with several ciliary nephronophthisis proteins, including NEK8, CEP164, ANKS6 (PubMed:30111592).</text>
</comment>
<comment type="interaction">
    <interactant intactId="EBI-713684">
        <id>Q13232</id>
    </interactant>
    <interactant intactId="EBI-2806959">
        <id>Q6ICB0</id>
        <label>DESI1</label>
    </interactant>
    <organismsDiffer>false</organismsDiffer>
    <experiments>6</experiments>
</comment>
<comment type="interaction">
    <interactant intactId="EBI-713684">
        <id>Q13232</id>
    </interactant>
    <interactant intactId="EBI-741141">
        <id>P15531</id>
        <label>NME1</label>
    </interactant>
    <organismsDiffer>false</organismsDiffer>
    <experiments>7</experiments>
</comment>
<comment type="interaction">
    <interactant intactId="EBI-713684">
        <id>Q13232</id>
    </interactant>
    <interactant intactId="EBI-713693">
        <id>P22392</id>
        <label>NME2</label>
    </interactant>
    <organismsDiffer>false</organismsDiffer>
    <experiments>4</experiments>
</comment>
<comment type="interaction">
    <interactant intactId="EBI-713684">
        <id>Q13232</id>
    </interactant>
    <interactant intactId="EBI-347996">
        <id>O43765</id>
        <label>SGTA</label>
    </interactant>
    <organismsDiffer>false</organismsDiffer>
    <experiments>12</experiments>
</comment>
<comment type="interaction">
    <interactant intactId="EBI-713684">
        <id>Q13232</id>
    </interactant>
    <interactant intactId="EBI-744081">
        <id>Q96EQ0</id>
        <label>SGTB</label>
    </interactant>
    <organismsDiffer>false</organismsDiffer>
    <experiments>5</experiments>
</comment>
<comment type="interaction">
    <interactant intactId="EBI-713684">
        <id>Q13232</id>
    </interactant>
    <interactant intactId="EBI-741480">
        <id>Q9UMX0</id>
        <label>UBQLN1</label>
    </interactant>
    <organismsDiffer>false</organismsDiffer>
    <experiments>6</experiments>
</comment>
<comment type="interaction">
    <interactant intactId="EBI-713684">
        <id>Q13232</id>
    </interactant>
    <interactant intactId="EBI-10173939">
        <id>Q9UMX0-2</id>
        <label>UBQLN1</label>
    </interactant>
    <organismsDiffer>false</organismsDiffer>
    <experiments>3</experiments>
</comment>
<comment type="interaction">
    <interactant intactId="EBI-713684">
        <id>Q13232</id>
    </interactant>
    <interactant intactId="EBI-947187">
        <id>Q9UHD9</id>
        <label>UBQLN2</label>
    </interactant>
    <organismsDiffer>false</organismsDiffer>
    <experiments>3</experiments>
</comment>
<comment type="subcellular location">
    <subcellularLocation>
        <location evidence="7 8">Mitochondrion outer membrane</location>
        <topology evidence="7 8">Peripheral membrane protein</topology>
    </subcellularLocation>
    <subcellularLocation>
        <location evidence="5">Cytoplasm</location>
    </subcellularLocation>
    <subcellularLocation>
        <location evidence="3">Cytoplasm</location>
        <location evidence="3">Cytoskeleton</location>
        <location evidence="3">Cilium basal body</location>
    </subcellularLocation>
</comment>
<comment type="developmental stage">
    <text evidence="9">Preferentially expressed at early stages of myeloid differentiation of highly purified CD34+ cells.</text>
</comment>
<comment type="domain">
    <text evidence="7">The N-terminal hydrophobic region (1-17) is critical for mitochondrial outer membrane targeting and phosphatidic acid binding.</text>
</comment>
<comment type="disease">
    <text evidence="7">A substitution in the initiation codon of the NME3 gene substitution (p.Met1Val), resulting in lack of full protein expression has been found in a female infant with an early-onset fatal neurodegenerative disorder.</text>
</comment>
<comment type="similarity">
    <text evidence="13">Belongs to the NDK family.</text>
</comment>
<protein>
    <recommendedName>
        <fullName>Nucleoside diphosphate kinase 3</fullName>
        <shortName>NDK 3</shortName>
        <shortName>NDP kinase 3</shortName>
        <ecNumber evidence="4 7">2.7.4.6</ecNumber>
    </recommendedName>
    <alternativeName>
        <fullName evidence="12">DR-nm23</fullName>
    </alternativeName>
    <alternativeName>
        <fullName evidence="11">Nucleoside diphosphate kinase C</fullName>
        <shortName>NDPKC</shortName>
    </alternativeName>
    <alternativeName>
        <fullName>nm23-H3</fullName>
    </alternativeName>
</protein>
<evidence type="ECO:0000250" key="1">
    <source>
        <dbReference type="UniProtKB" id="P22392"/>
    </source>
</evidence>
<evidence type="ECO:0000250" key="2">
    <source>
        <dbReference type="UniProtKB" id="Q9PTF3"/>
    </source>
</evidence>
<evidence type="ECO:0000250" key="3">
    <source>
        <dbReference type="UniProtKB" id="Q9WV85"/>
    </source>
</evidence>
<evidence type="ECO:0000269" key="4">
    <source>
    </source>
</evidence>
<evidence type="ECO:0000269" key="5">
    <source>
    </source>
</evidence>
<evidence type="ECO:0000269" key="6">
    <source>
    </source>
</evidence>
<evidence type="ECO:0000269" key="7">
    <source>
    </source>
</evidence>
<evidence type="ECO:0000269" key="8">
    <source>
    </source>
</evidence>
<evidence type="ECO:0000269" key="9">
    <source>
    </source>
</evidence>
<evidence type="ECO:0000269" key="10">
    <source ref="5"/>
</evidence>
<evidence type="ECO:0000303" key="11">
    <source>
    </source>
</evidence>
<evidence type="ECO:0000303" key="12">
    <source>
    </source>
</evidence>
<evidence type="ECO:0000305" key="13"/>
<evidence type="ECO:0000312" key="14">
    <source>
        <dbReference type="HGNC" id="HGNC:7851"/>
    </source>
</evidence>
<evidence type="ECO:0007744" key="15">
    <source>
        <dbReference type="PDB" id="1ZS6"/>
    </source>
</evidence>
<evidence type="ECO:0007829" key="16">
    <source>
        <dbReference type="PDB" id="1ZS6"/>
    </source>
</evidence>
<evidence type="ECO:0007829" key="17">
    <source>
        <dbReference type="PDB" id="8QW2"/>
    </source>
</evidence>
<evidence type="ECO:0007829" key="18">
    <source>
        <dbReference type="PDB" id="8QW3"/>
    </source>
</evidence>
<keyword id="KW-0002">3D-structure</keyword>
<keyword id="KW-0067">ATP-binding</keyword>
<keyword id="KW-0966">Cell projection</keyword>
<keyword id="KW-0963">Cytoplasm</keyword>
<keyword id="KW-0206">Cytoskeleton</keyword>
<keyword id="KW-0418">Kinase</keyword>
<keyword id="KW-0460">Magnesium</keyword>
<keyword id="KW-0472">Membrane</keyword>
<keyword id="KW-0479">Metal-binding</keyword>
<keyword id="KW-0496">Mitochondrion</keyword>
<keyword id="KW-1000">Mitochondrion outer membrane</keyword>
<keyword id="KW-0546">Nucleotide metabolism</keyword>
<keyword id="KW-0547">Nucleotide-binding</keyword>
<keyword id="KW-1267">Proteomics identification</keyword>
<keyword id="KW-1185">Reference proteome</keyword>
<keyword id="KW-0808">Transferase</keyword>
<dbReference type="EC" id="2.7.4.6" evidence="4 7"/>
<dbReference type="EMBL" id="U29656">
    <property type="protein sequence ID" value="AAA85097.1"/>
    <property type="molecule type" value="mRNA"/>
</dbReference>
<dbReference type="EMBL" id="AE006639">
    <property type="protein sequence ID" value="AAK61291.1"/>
    <property type="molecule type" value="Genomic_DNA"/>
</dbReference>
<dbReference type="EMBL" id="BC000250">
    <property type="protein sequence ID" value="AAH00250.1"/>
    <property type="molecule type" value="mRNA"/>
</dbReference>
<dbReference type="CCDS" id="CCDS10443.1"/>
<dbReference type="PIR" id="I39074">
    <property type="entry name" value="I39074"/>
</dbReference>
<dbReference type="RefSeq" id="NP_002504.2">
    <property type="nucleotide sequence ID" value="NM_002513.2"/>
</dbReference>
<dbReference type="PDB" id="1ZS6">
    <property type="method" value="X-ray"/>
    <property type="resolution" value="2.30 A"/>
    <property type="chains" value="A/B/D=1-169"/>
</dbReference>
<dbReference type="PDB" id="8QVY">
    <property type="method" value="X-ray"/>
    <property type="resolution" value="2.64 A"/>
    <property type="chains" value="A/B/C/D/E/F=18-169"/>
</dbReference>
<dbReference type="PDB" id="8QVZ">
    <property type="method" value="X-ray"/>
    <property type="resolution" value="1.77 A"/>
    <property type="chains" value="A/B/C/D/E/F=18-169"/>
</dbReference>
<dbReference type="PDB" id="8QW0">
    <property type="method" value="X-ray"/>
    <property type="resolution" value="2.17 A"/>
    <property type="chains" value="A/B/C/D/E/F/G/H/I/J/K/L=18-169"/>
</dbReference>
<dbReference type="PDB" id="8QW1">
    <property type="method" value="X-ray"/>
    <property type="resolution" value="2.10 A"/>
    <property type="chains" value="A/B/C/D/E/F=18-169"/>
</dbReference>
<dbReference type="PDB" id="8QW2">
    <property type="method" value="X-ray"/>
    <property type="resolution" value="1.87 A"/>
    <property type="chains" value="A/B/C/D/E/F=18-169"/>
</dbReference>
<dbReference type="PDB" id="8QW3">
    <property type="method" value="X-ray"/>
    <property type="resolution" value="1.25 A"/>
    <property type="chains" value="A/B/C/D/E/F=18-169"/>
</dbReference>
<dbReference type="PDBsum" id="1ZS6"/>
<dbReference type="PDBsum" id="8QVY"/>
<dbReference type="PDBsum" id="8QVZ"/>
<dbReference type="PDBsum" id="8QW0"/>
<dbReference type="PDBsum" id="8QW1"/>
<dbReference type="PDBsum" id="8QW2"/>
<dbReference type="PDBsum" id="8QW3"/>
<dbReference type="SMR" id="Q13232"/>
<dbReference type="BioGRID" id="110896">
    <property type="interactions" value="123"/>
</dbReference>
<dbReference type="DIP" id="DIP-49960N"/>
<dbReference type="FunCoup" id="Q13232">
    <property type="interactions" value="916"/>
</dbReference>
<dbReference type="IntAct" id="Q13232">
    <property type="interactions" value="70"/>
</dbReference>
<dbReference type="MINT" id="Q13232"/>
<dbReference type="STRING" id="9606.ENSP00000219302"/>
<dbReference type="iPTMnet" id="Q13232"/>
<dbReference type="PhosphoSitePlus" id="Q13232"/>
<dbReference type="SwissPalm" id="Q13232"/>
<dbReference type="BioMuta" id="NME3"/>
<dbReference type="DMDM" id="21264477"/>
<dbReference type="jPOST" id="Q13232"/>
<dbReference type="MassIVE" id="Q13232"/>
<dbReference type="PaxDb" id="9606-ENSP00000219302"/>
<dbReference type="PeptideAtlas" id="Q13232"/>
<dbReference type="ProteomicsDB" id="59239"/>
<dbReference type="Pumba" id="Q13232"/>
<dbReference type="Antibodypedia" id="23225">
    <property type="antibodies" value="208 antibodies from 25 providers"/>
</dbReference>
<dbReference type="DNASU" id="4832"/>
<dbReference type="Ensembl" id="ENST00000219302.8">
    <property type="protein sequence ID" value="ENSP00000219302.3"/>
    <property type="gene ID" value="ENSG00000103024.8"/>
</dbReference>
<dbReference type="GeneID" id="4832"/>
<dbReference type="KEGG" id="hsa:4832"/>
<dbReference type="MANE-Select" id="ENST00000219302.8">
    <property type="protein sequence ID" value="ENSP00000219302.3"/>
    <property type="RefSeq nucleotide sequence ID" value="NM_002513.3"/>
    <property type="RefSeq protein sequence ID" value="NP_002504.2"/>
</dbReference>
<dbReference type="UCSC" id="uc002cmm.4">
    <property type="organism name" value="human"/>
</dbReference>
<dbReference type="AGR" id="HGNC:7851"/>
<dbReference type="CTD" id="4832"/>
<dbReference type="DisGeNET" id="4832"/>
<dbReference type="GeneCards" id="NME3"/>
<dbReference type="HGNC" id="HGNC:7851">
    <property type="gene designation" value="NME3"/>
</dbReference>
<dbReference type="HPA" id="ENSG00000103024">
    <property type="expression patterns" value="Low tissue specificity"/>
</dbReference>
<dbReference type="MIM" id="601817">
    <property type="type" value="gene"/>
</dbReference>
<dbReference type="neXtProt" id="NX_Q13232"/>
<dbReference type="OpenTargets" id="ENSG00000103024"/>
<dbReference type="PharmGKB" id="PA31656"/>
<dbReference type="VEuPathDB" id="HostDB:ENSG00000103024"/>
<dbReference type="eggNOG" id="KOG0888">
    <property type="taxonomic scope" value="Eukaryota"/>
</dbReference>
<dbReference type="GeneTree" id="ENSGT00940000161283"/>
<dbReference type="InParanoid" id="Q13232"/>
<dbReference type="OMA" id="ACAGVHE"/>
<dbReference type="OrthoDB" id="2162449at2759"/>
<dbReference type="PAN-GO" id="Q13232">
    <property type="GO annotations" value="1 GO annotation based on evolutionary models"/>
</dbReference>
<dbReference type="PhylomeDB" id="Q13232"/>
<dbReference type="TreeFam" id="TF106373"/>
<dbReference type="BRENDA" id="2.7.4.6">
    <property type="organism ID" value="2681"/>
</dbReference>
<dbReference type="PathwayCommons" id="Q13232"/>
<dbReference type="Reactome" id="R-HSA-499943">
    <property type="pathway name" value="Interconversion of nucleotide di- and triphosphates"/>
</dbReference>
<dbReference type="SignaLink" id="Q13232"/>
<dbReference type="BioGRID-ORCS" id="4832">
    <property type="hits" value="18 hits in 1163 CRISPR screens"/>
</dbReference>
<dbReference type="CD-CODE" id="91857CE7">
    <property type="entry name" value="Nucleolus"/>
</dbReference>
<dbReference type="CD-CODE" id="FB4E32DD">
    <property type="entry name" value="Presynaptic clusters and postsynaptic densities"/>
</dbReference>
<dbReference type="ChiTaRS" id="NME3">
    <property type="organism name" value="human"/>
</dbReference>
<dbReference type="EvolutionaryTrace" id="Q13232"/>
<dbReference type="GeneWiki" id="NME3"/>
<dbReference type="GenomeRNAi" id="4832"/>
<dbReference type="Pharos" id="Q13232">
    <property type="development level" value="Tbio"/>
</dbReference>
<dbReference type="PRO" id="PR:Q13232"/>
<dbReference type="Proteomes" id="UP000005640">
    <property type="component" value="Chromosome 16"/>
</dbReference>
<dbReference type="RNAct" id="Q13232">
    <property type="molecule type" value="protein"/>
</dbReference>
<dbReference type="Bgee" id="ENSG00000103024">
    <property type="expression patterns" value="Expressed in adenohypophysis and 177 other cell types or tissues"/>
</dbReference>
<dbReference type="ExpressionAtlas" id="Q13232">
    <property type="expression patterns" value="baseline and differential"/>
</dbReference>
<dbReference type="GO" id="GO:0036064">
    <property type="term" value="C:ciliary basal body"/>
    <property type="evidence" value="ECO:0000250"/>
    <property type="project" value="UniProtKB"/>
</dbReference>
<dbReference type="GO" id="GO:0005737">
    <property type="term" value="C:cytoplasm"/>
    <property type="evidence" value="ECO:0000314"/>
    <property type="project" value="UniProtKB"/>
</dbReference>
<dbReference type="GO" id="GO:0005829">
    <property type="term" value="C:cytosol"/>
    <property type="evidence" value="ECO:0000304"/>
    <property type="project" value="Reactome"/>
</dbReference>
<dbReference type="GO" id="GO:0005741">
    <property type="term" value="C:mitochondrial outer membrane"/>
    <property type="evidence" value="ECO:0000314"/>
    <property type="project" value="UniProtKB"/>
</dbReference>
<dbReference type="GO" id="GO:0005739">
    <property type="term" value="C:mitochondrion"/>
    <property type="evidence" value="ECO:0006056"/>
    <property type="project" value="FlyBase"/>
</dbReference>
<dbReference type="GO" id="GO:0005524">
    <property type="term" value="F:ATP binding"/>
    <property type="evidence" value="ECO:0007669"/>
    <property type="project" value="UniProtKB-KW"/>
</dbReference>
<dbReference type="GO" id="GO:0046872">
    <property type="term" value="F:metal ion binding"/>
    <property type="evidence" value="ECO:0007669"/>
    <property type="project" value="UniProtKB-KW"/>
</dbReference>
<dbReference type="GO" id="GO:0004550">
    <property type="term" value="F:nucleoside diphosphate kinase activity"/>
    <property type="evidence" value="ECO:0000314"/>
    <property type="project" value="UniProtKB"/>
</dbReference>
<dbReference type="GO" id="GO:0006915">
    <property type="term" value="P:apoptotic process"/>
    <property type="evidence" value="ECO:0000304"/>
    <property type="project" value="ProtInc"/>
</dbReference>
<dbReference type="GO" id="GO:0006241">
    <property type="term" value="P:CTP biosynthetic process"/>
    <property type="evidence" value="ECO:0007669"/>
    <property type="project" value="InterPro"/>
</dbReference>
<dbReference type="GO" id="GO:0006281">
    <property type="term" value="P:DNA repair"/>
    <property type="evidence" value="ECO:0000315"/>
    <property type="project" value="UniProtKB"/>
</dbReference>
<dbReference type="GO" id="GO:0006183">
    <property type="term" value="P:GTP biosynthetic process"/>
    <property type="evidence" value="ECO:0007669"/>
    <property type="project" value="InterPro"/>
</dbReference>
<dbReference type="GO" id="GO:0008053">
    <property type="term" value="P:mitochondrial fusion"/>
    <property type="evidence" value="ECO:0000315"/>
    <property type="project" value="UniProtKB"/>
</dbReference>
<dbReference type="GO" id="GO:0009142">
    <property type="term" value="P:nucleoside triphosphate biosynthetic process"/>
    <property type="evidence" value="ECO:0000314"/>
    <property type="project" value="UniProtKB"/>
</dbReference>
<dbReference type="GO" id="GO:0006228">
    <property type="term" value="P:UTP biosynthetic process"/>
    <property type="evidence" value="ECO:0007669"/>
    <property type="project" value="InterPro"/>
</dbReference>
<dbReference type="CDD" id="cd04413">
    <property type="entry name" value="NDPk_I"/>
    <property type="match status" value="1"/>
</dbReference>
<dbReference type="FunFam" id="3.30.70.141:FF:000002">
    <property type="entry name" value="Nucleoside diphosphate kinase"/>
    <property type="match status" value="1"/>
</dbReference>
<dbReference type="Gene3D" id="3.30.70.141">
    <property type="entry name" value="Nucleoside diphosphate kinase-like domain"/>
    <property type="match status" value="1"/>
</dbReference>
<dbReference type="HAMAP" id="MF_00451">
    <property type="entry name" value="NDP_kinase"/>
    <property type="match status" value="1"/>
</dbReference>
<dbReference type="InterPro" id="IPR034907">
    <property type="entry name" value="NDK-like_dom"/>
</dbReference>
<dbReference type="InterPro" id="IPR036850">
    <property type="entry name" value="NDK-like_dom_sf"/>
</dbReference>
<dbReference type="InterPro" id="IPR001564">
    <property type="entry name" value="Nucleoside_diP_kinase"/>
</dbReference>
<dbReference type="InterPro" id="IPR023005">
    <property type="entry name" value="Nucleoside_diP_kinase_AS"/>
</dbReference>
<dbReference type="NCBIfam" id="NF001908">
    <property type="entry name" value="PRK00668.1"/>
    <property type="match status" value="1"/>
</dbReference>
<dbReference type="PANTHER" id="PTHR11349">
    <property type="entry name" value="NUCLEOSIDE DIPHOSPHATE KINASE"/>
    <property type="match status" value="1"/>
</dbReference>
<dbReference type="Pfam" id="PF00334">
    <property type="entry name" value="NDK"/>
    <property type="match status" value="1"/>
</dbReference>
<dbReference type="PRINTS" id="PR01243">
    <property type="entry name" value="NUCDPKINASE"/>
</dbReference>
<dbReference type="SMART" id="SM00562">
    <property type="entry name" value="NDK"/>
    <property type="match status" value="1"/>
</dbReference>
<dbReference type="SUPFAM" id="SSF54919">
    <property type="entry name" value="Nucleoside diphosphate kinase, NDK"/>
    <property type="match status" value="1"/>
</dbReference>
<dbReference type="PROSITE" id="PS00469">
    <property type="entry name" value="NDPK"/>
    <property type="match status" value="1"/>
</dbReference>
<dbReference type="PROSITE" id="PS51374">
    <property type="entry name" value="NDPK_LIKE"/>
    <property type="match status" value="1"/>
</dbReference>
<organism>
    <name type="scientific">Homo sapiens</name>
    <name type="common">Human</name>
    <dbReference type="NCBI Taxonomy" id="9606"/>
    <lineage>
        <taxon>Eukaryota</taxon>
        <taxon>Metazoa</taxon>
        <taxon>Chordata</taxon>
        <taxon>Craniata</taxon>
        <taxon>Vertebrata</taxon>
        <taxon>Euteleostomi</taxon>
        <taxon>Mammalia</taxon>
        <taxon>Eutheria</taxon>
        <taxon>Euarchontoglires</taxon>
        <taxon>Primates</taxon>
        <taxon>Haplorrhini</taxon>
        <taxon>Catarrhini</taxon>
        <taxon>Hominidae</taxon>
        <taxon>Homo</taxon>
    </lineage>
</organism>